<protein>
    <recommendedName>
        <fullName evidence="1">Aspartate carbamoyltransferase catalytic subunit</fullName>
        <ecNumber evidence="1">2.1.3.2</ecNumber>
    </recommendedName>
    <alternativeName>
        <fullName evidence="1">Aspartate transcarbamylase</fullName>
        <shortName evidence="1">ATCase</shortName>
    </alternativeName>
</protein>
<dbReference type="EC" id="2.1.3.2" evidence="1"/>
<dbReference type="EMBL" id="CP000854">
    <property type="protein sequence ID" value="ACC40644.1"/>
    <property type="molecule type" value="Genomic_DNA"/>
</dbReference>
<dbReference type="RefSeq" id="WP_012393959.1">
    <property type="nucleotide sequence ID" value="NC_010612.1"/>
</dbReference>
<dbReference type="SMR" id="B2HNE6"/>
<dbReference type="STRING" id="216594.MMAR_2195"/>
<dbReference type="KEGG" id="mmi:MMAR_2195"/>
<dbReference type="eggNOG" id="COG0540">
    <property type="taxonomic scope" value="Bacteria"/>
</dbReference>
<dbReference type="HOGENOM" id="CLU_043846_2_0_11"/>
<dbReference type="OrthoDB" id="9774690at2"/>
<dbReference type="UniPathway" id="UPA00070">
    <property type="reaction ID" value="UER00116"/>
</dbReference>
<dbReference type="Proteomes" id="UP000001190">
    <property type="component" value="Chromosome"/>
</dbReference>
<dbReference type="GO" id="GO:0005829">
    <property type="term" value="C:cytosol"/>
    <property type="evidence" value="ECO:0007669"/>
    <property type="project" value="TreeGrafter"/>
</dbReference>
<dbReference type="GO" id="GO:0016597">
    <property type="term" value="F:amino acid binding"/>
    <property type="evidence" value="ECO:0007669"/>
    <property type="project" value="InterPro"/>
</dbReference>
<dbReference type="GO" id="GO:0004070">
    <property type="term" value="F:aspartate carbamoyltransferase activity"/>
    <property type="evidence" value="ECO:0007669"/>
    <property type="project" value="UniProtKB-UniRule"/>
</dbReference>
<dbReference type="GO" id="GO:0006207">
    <property type="term" value="P:'de novo' pyrimidine nucleobase biosynthetic process"/>
    <property type="evidence" value="ECO:0007669"/>
    <property type="project" value="InterPro"/>
</dbReference>
<dbReference type="GO" id="GO:0044205">
    <property type="term" value="P:'de novo' UMP biosynthetic process"/>
    <property type="evidence" value="ECO:0007669"/>
    <property type="project" value="UniProtKB-UniRule"/>
</dbReference>
<dbReference type="GO" id="GO:0006520">
    <property type="term" value="P:amino acid metabolic process"/>
    <property type="evidence" value="ECO:0007669"/>
    <property type="project" value="InterPro"/>
</dbReference>
<dbReference type="FunFam" id="3.40.50.1370:FF:000007">
    <property type="entry name" value="Aspartate carbamoyltransferase"/>
    <property type="match status" value="1"/>
</dbReference>
<dbReference type="FunFam" id="3.40.50.1370:FF:000012">
    <property type="entry name" value="Aspartate carbamoyltransferase"/>
    <property type="match status" value="1"/>
</dbReference>
<dbReference type="Gene3D" id="3.40.50.1370">
    <property type="entry name" value="Aspartate/ornithine carbamoyltransferase"/>
    <property type="match status" value="2"/>
</dbReference>
<dbReference type="HAMAP" id="MF_00001">
    <property type="entry name" value="Asp_carb_tr"/>
    <property type="match status" value="1"/>
</dbReference>
<dbReference type="InterPro" id="IPR006132">
    <property type="entry name" value="Asp/Orn_carbamoyltranf_P-bd"/>
</dbReference>
<dbReference type="InterPro" id="IPR006130">
    <property type="entry name" value="Asp/Orn_carbamoylTrfase"/>
</dbReference>
<dbReference type="InterPro" id="IPR036901">
    <property type="entry name" value="Asp/Orn_carbamoylTrfase_sf"/>
</dbReference>
<dbReference type="InterPro" id="IPR002082">
    <property type="entry name" value="Asp_carbamoyltransf"/>
</dbReference>
<dbReference type="InterPro" id="IPR006131">
    <property type="entry name" value="Asp_carbamoyltransf_Asp/Orn-bd"/>
</dbReference>
<dbReference type="NCBIfam" id="TIGR00670">
    <property type="entry name" value="asp_carb_tr"/>
    <property type="match status" value="1"/>
</dbReference>
<dbReference type="NCBIfam" id="NF002032">
    <property type="entry name" value="PRK00856.1"/>
    <property type="match status" value="1"/>
</dbReference>
<dbReference type="PANTHER" id="PTHR45753:SF6">
    <property type="entry name" value="ASPARTATE CARBAMOYLTRANSFERASE"/>
    <property type="match status" value="1"/>
</dbReference>
<dbReference type="PANTHER" id="PTHR45753">
    <property type="entry name" value="ORNITHINE CARBAMOYLTRANSFERASE, MITOCHONDRIAL"/>
    <property type="match status" value="1"/>
</dbReference>
<dbReference type="Pfam" id="PF00185">
    <property type="entry name" value="OTCace"/>
    <property type="match status" value="1"/>
</dbReference>
<dbReference type="Pfam" id="PF02729">
    <property type="entry name" value="OTCace_N"/>
    <property type="match status" value="1"/>
</dbReference>
<dbReference type="PRINTS" id="PR00100">
    <property type="entry name" value="AOTCASE"/>
</dbReference>
<dbReference type="PRINTS" id="PR00101">
    <property type="entry name" value="ATCASE"/>
</dbReference>
<dbReference type="SUPFAM" id="SSF53671">
    <property type="entry name" value="Aspartate/ornithine carbamoyltransferase"/>
    <property type="match status" value="1"/>
</dbReference>
<dbReference type="PROSITE" id="PS00097">
    <property type="entry name" value="CARBAMOYLTRANSFERASE"/>
    <property type="match status" value="1"/>
</dbReference>
<gene>
    <name evidence="1" type="primary">pyrB</name>
    <name type="ordered locus">MMAR_2195</name>
</gene>
<organism>
    <name type="scientific">Mycobacterium marinum (strain ATCC BAA-535 / M)</name>
    <dbReference type="NCBI Taxonomy" id="216594"/>
    <lineage>
        <taxon>Bacteria</taxon>
        <taxon>Bacillati</taxon>
        <taxon>Actinomycetota</taxon>
        <taxon>Actinomycetes</taxon>
        <taxon>Mycobacteriales</taxon>
        <taxon>Mycobacteriaceae</taxon>
        <taxon>Mycobacterium</taxon>
        <taxon>Mycobacterium ulcerans group</taxon>
    </lineage>
</organism>
<name>PYRB_MYCMM</name>
<accession>B2HNE6</accession>
<feature type="chain" id="PRO_1000088779" description="Aspartate carbamoyltransferase catalytic subunit">
    <location>
        <begin position="1"/>
        <end position="320"/>
    </location>
</feature>
<feature type="binding site" evidence="1">
    <location>
        <position position="57"/>
    </location>
    <ligand>
        <name>carbamoyl phosphate</name>
        <dbReference type="ChEBI" id="CHEBI:58228"/>
    </ligand>
</feature>
<feature type="binding site" evidence="1">
    <location>
        <position position="58"/>
    </location>
    <ligand>
        <name>carbamoyl phosphate</name>
        <dbReference type="ChEBI" id="CHEBI:58228"/>
    </ligand>
</feature>
<feature type="binding site" evidence="1">
    <location>
        <position position="85"/>
    </location>
    <ligand>
        <name>L-aspartate</name>
        <dbReference type="ChEBI" id="CHEBI:29991"/>
    </ligand>
</feature>
<feature type="binding site" evidence="1">
    <location>
        <position position="107"/>
    </location>
    <ligand>
        <name>carbamoyl phosphate</name>
        <dbReference type="ChEBI" id="CHEBI:58228"/>
    </ligand>
</feature>
<feature type="binding site" evidence="1">
    <location>
        <position position="141"/>
    </location>
    <ligand>
        <name>carbamoyl phosphate</name>
        <dbReference type="ChEBI" id="CHEBI:58228"/>
    </ligand>
</feature>
<feature type="binding site" evidence="1">
    <location>
        <position position="144"/>
    </location>
    <ligand>
        <name>carbamoyl phosphate</name>
        <dbReference type="ChEBI" id="CHEBI:58228"/>
    </ligand>
</feature>
<feature type="binding site" evidence="1">
    <location>
        <position position="174"/>
    </location>
    <ligand>
        <name>L-aspartate</name>
        <dbReference type="ChEBI" id="CHEBI:29991"/>
    </ligand>
</feature>
<feature type="binding site" evidence="1">
    <location>
        <position position="228"/>
    </location>
    <ligand>
        <name>L-aspartate</name>
        <dbReference type="ChEBI" id="CHEBI:29991"/>
    </ligand>
</feature>
<feature type="binding site" evidence="1">
    <location>
        <position position="269"/>
    </location>
    <ligand>
        <name>carbamoyl phosphate</name>
        <dbReference type="ChEBI" id="CHEBI:58228"/>
    </ligand>
</feature>
<feature type="binding site" evidence="1">
    <location>
        <position position="270"/>
    </location>
    <ligand>
        <name>carbamoyl phosphate</name>
        <dbReference type="ChEBI" id="CHEBI:58228"/>
    </ligand>
</feature>
<evidence type="ECO:0000255" key="1">
    <source>
        <dbReference type="HAMAP-Rule" id="MF_00001"/>
    </source>
</evidence>
<comment type="function">
    <text evidence="1">Catalyzes the condensation of carbamoyl phosphate and aspartate to form carbamoyl aspartate and inorganic phosphate, the committed step in the de novo pyrimidine nucleotide biosynthesis pathway.</text>
</comment>
<comment type="catalytic activity">
    <reaction evidence="1">
        <text>carbamoyl phosphate + L-aspartate = N-carbamoyl-L-aspartate + phosphate + H(+)</text>
        <dbReference type="Rhea" id="RHEA:20013"/>
        <dbReference type="ChEBI" id="CHEBI:15378"/>
        <dbReference type="ChEBI" id="CHEBI:29991"/>
        <dbReference type="ChEBI" id="CHEBI:32814"/>
        <dbReference type="ChEBI" id="CHEBI:43474"/>
        <dbReference type="ChEBI" id="CHEBI:58228"/>
        <dbReference type="EC" id="2.1.3.2"/>
    </reaction>
</comment>
<comment type="pathway">
    <text evidence="1">Pyrimidine metabolism; UMP biosynthesis via de novo pathway; (S)-dihydroorotate from bicarbonate: step 2/3.</text>
</comment>
<comment type="subunit">
    <text evidence="1">Heterododecamer (2C3:3R2) of six catalytic PyrB chains organized as two trimers (C3), and six regulatory PyrI chains organized as three dimers (R2).</text>
</comment>
<comment type="similarity">
    <text evidence="1">Belongs to the aspartate/ornithine carbamoyltransferase superfamily. ATCase family.</text>
</comment>
<keyword id="KW-0665">Pyrimidine biosynthesis</keyword>
<keyword id="KW-1185">Reference proteome</keyword>
<keyword id="KW-0808">Transferase</keyword>
<sequence length="320" mass="33820">MTPRHLLAAGDLSRDDAIAILDDADRFAQALVGREVKKLPTLRGRTVVTMFYENSTRTRVSFEVAGKWMSADVINVSASGSSVSKGESLRDTALTLRAAGADALIIRHPASGAARLLADWTAGQSDGGPSVINAGDGTHEHPTQALLDALTIRQRLGGIEGRRVVIVGDILHSRVARSNVMLLHTLGAEVVLVAPPTLLPVGVADWPVTVSHDLDAELPAADAVLMLRVQAERMNGGFFPSVREYSTLYGLSDRRQAMLGGHAVVLHPGPMLRGMEIASSVADSSQSAVLQQVSNGVHIRMAVLFHVLVGLESAGEEGAA</sequence>
<reference key="1">
    <citation type="journal article" date="2008" name="Genome Res.">
        <title>Insights from the complete genome sequence of Mycobacterium marinum on the evolution of Mycobacterium tuberculosis.</title>
        <authorList>
            <person name="Stinear T.P."/>
            <person name="Seemann T."/>
            <person name="Harrison P.F."/>
            <person name="Jenkin G.A."/>
            <person name="Davies J.K."/>
            <person name="Johnson P.D."/>
            <person name="Abdellah Z."/>
            <person name="Arrowsmith C."/>
            <person name="Chillingworth T."/>
            <person name="Churcher C."/>
            <person name="Clarke K."/>
            <person name="Cronin A."/>
            <person name="Davis P."/>
            <person name="Goodhead I."/>
            <person name="Holroyd N."/>
            <person name="Jagels K."/>
            <person name="Lord A."/>
            <person name="Moule S."/>
            <person name="Mungall K."/>
            <person name="Norbertczak H."/>
            <person name="Quail M.A."/>
            <person name="Rabbinowitsch E."/>
            <person name="Walker D."/>
            <person name="White B."/>
            <person name="Whitehead S."/>
            <person name="Small P.L."/>
            <person name="Brosch R."/>
            <person name="Ramakrishnan L."/>
            <person name="Fischbach M.A."/>
            <person name="Parkhill J."/>
            <person name="Cole S.T."/>
        </authorList>
    </citation>
    <scope>NUCLEOTIDE SEQUENCE [LARGE SCALE GENOMIC DNA]</scope>
    <source>
        <strain>ATCC BAA-535 / M</strain>
    </source>
</reference>
<proteinExistence type="inferred from homology"/>